<keyword id="KW-0028">Amino-acid biosynthesis</keyword>
<keyword id="KW-0963">Cytoplasm</keyword>
<keyword id="KW-0368">Histidine biosynthesis</keyword>
<proteinExistence type="inferred from homology"/>
<sequence length="392" mass="44570">MTKKLFMFEKPLGMRDTLPFLYEIKKRVRQAMIREIETWGYELIETPTLEYYETVGTVSAIDDHQLFKLLDQQGHTLVLRPDMTAPIARLAASRLYKEGNPLRLAYNANVFRAQQREGGRPAEFEQIGVECIGDGTVAADAEVISVMIAALRQAGLQHFTVTIGHIGYVNALFLEIVGNEERASVLRRFLYEKNYVGYREHVKSLPLSSIDQKRLLQLLHLHGNDMTMEEAKELVHSEEGKRAVDDLCELSNALQLYGVDDVVKIDMTLVSHMSYYTGILFEVYAEHVGFPIGNGGRYDELLEKFSRKAPATGFGIRVDRLIEALGESEEEAAIECIVFSQERFAEAIELARTKRREGKRVVLQHISGIRDIDAYSKRYKPITYLLGSTEKE</sequence>
<protein>
    <recommendedName>
        <fullName evidence="1">ATP phosphoribosyltransferase regulatory subunit</fullName>
    </recommendedName>
</protein>
<gene>
    <name evidence="1" type="primary">hisZ</name>
    <name type="ordered locus">GWCH70_2981</name>
</gene>
<dbReference type="EMBL" id="CP001638">
    <property type="protein sequence ID" value="ACS25654.1"/>
    <property type="molecule type" value="Genomic_DNA"/>
</dbReference>
<dbReference type="SMR" id="C5D7P4"/>
<dbReference type="STRING" id="471223.GWCH70_2981"/>
<dbReference type="KEGG" id="gwc:GWCH70_2981"/>
<dbReference type="eggNOG" id="COG3705">
    <property type="taxonomic scope" value="Bacteria"/>
</dbReference>
<dbReference type="HOGENOM" id="CLU_025113_0_0_9"/>
<dbReference type="OrthoDB" id="9800814at2"/>
<dbReference type="UniPathway" id="UPA00031">
    <property type="reaction ID" value="UER00006"/>
</dbReference>
<dbReference type="GO" id="GO:0005737">
    <property type="term" value="C:cytoplasm"/>
    <property type="evidence" value="ECO:0007669"/>
    <property type="project" value="UniProtKB-SubCell"/>
</dbReference>
<dbReference type="GO" id="GO:0140096">
    <property type="term" value="F:catalytic activity, acting on a protein"/>
    <property type="evidence" value="ECO:0007669"/>
    <property type="project" value="UniProtKB-ARBA"/>
</dbReference>
<dbReference type="GO" id="GO:0004821">
    <property type="term" value="F:histidine-tRNA ligase activity"/>
    <property type="evidence" value="ECO:0007669"/>
    <property type="project" value="InterPro"/>
</dbReference>
<dbReference type="GO" id="GO:0016740">
    <property type="term" value="F:transferase activity"/>
    <property type="evidence" value="ECO:0007669"/>
    <property type="project" value="UniProtKB-ARBA"/>
</dbReference>
<dbReference type="GO" id="GO:0006427">
    <property type="term" value="P:histidyl-tRNA aminoacylation"/>
    <property type="evidence" value="ECO:0007669"/>
    <property type="project" value="InterPro"/>
</dbReference>
<dbReference type="GO" id="GO:0000105">
    <property type="term" value="P:L-histidine biosynthetic process"/>
    <property type="evidence" value="ECO:0007669"/>
    <property type="project" value="UniProtKB-UniRule"/>
</dbReference>
<dbReference type="CDD" id="cd00773">
    <property type="entry name" value="HisRS-like_core"/>
    <property type="match status" value="1"/>
</dbReference>
<dbReference type="Gene3D" id="3.40.50.12590">
    <property type="match status" value="1"/>
</dbReference>
<dbReference type="Gene3D" id="3.30.930.10">
    <property type="entry name" value="Bira Bifunctional Protein, Domain 2"/>
    <property type="match status" value="1"/>
</dbReference>
<dbReference type="HAMAP" id="MF_00125">
    <property type="entry name" value="HisZ"/>
    <property type="match status" value="1"/>
</dbReference>
<dbReference type="InterPro" id="IPR006195">
    <property type="entry name" value="aa-tRNA-synth_II"/>
</dbReference>
<dbReference type="InterPro" id="IPR045864">
    <property type="entry name" value="aa-tRNA-synth_II/BPL/LPL"/>
</dbReference>
<dbReference type="InterPro" id="IPR041715">
    <property type="entry name" value="HisRS-like_core"/>
</dbReference>
<dbReference type="InterPro" id="IPR004516">
    <property type="entry name" value="HisRS/HisZ"/>
</dbReference>
<dbReference type="InterPro" id="IPR004517">
    <property type="entry name" value="HisZ"/>
</dbReference>
<dbReference type="InterPro" id="IPR053846">
    <property type="entry name" value="HisZ-C"/>
</dbReference>
<dbReference type="NCBIfam" id="TIGR00443">
    <property type="entry name" value="hisZ_biosyn_reg"/>
    <property type="match status" value="1"/>
</dbReference>
<dbReference type="NCBIfam" id="NF008941">
    <property type="entry name" value="PRK12292.2-4"/>
    <property type="match status" value="1"/>
</dbReference>
<dbReference type="PANTHER" id="PTHR43707:SF1">
    <property type="entry name" value="HISTIDINE--TRNA LIGASE, MITOCHONDRIAL-RELATED"/>
    <property type="match status" value="1"/>
</dbReference>
<dbReference type="PANTHER" id="PTHR43707">
    <property type="entry name" value="HISTIDYL-TRNA SYNTHETASE"/>
    <property type="match status" value="1"/>
</dbReference>
<dbReference type="Pfam" id="PF21996">
    <property type="entry name" value="HisZ-like"/>
    <property type="match status" value="1"/>
</dbReference>
<dbReference type="Pfam" id="PF13393">
    <property type="entry name" value="tRNA-synt_His"/>
    <property type="match status" value="1"/>
</dbReference>
<dbReference type="PIRSF" id="PIRSF001549">
    <property type="entry name" value="His-tRNA_synth"/>
    <property type="match status" value="1"/>
</dbReference>
<dbReference type="SUPFAM" id="SSF55681">
    <property type="entry name" value="Class II aaRS and biotin synthetases"/>
    <property type="match status" value="1"/>
</dbReference>
<dbReference type="PROSITE" id="PS50862">
    <property type="entry name" value="AA_TRNA_LIGASE_II"/>
    <property type="match status" value="1"/>
</dbReference>
<accession>C5D7P4</accession>
<comment type="function">
    <text evidence="1">Required for the first step of histidine biosynthesis. May allow the feedback regulation of ATP phosphoribosyltransferase activity by histidine.</text>
</comment>
<comment type="pathway">
    <text evidence="1">Amino-acid biosynthesis; L-histidine biosynthesis; L-histidine from 5-phospho-alpha-D-ribose 1-diphosphate: step 1/9.</text>
</comment>
<comment type="subunit">
    <text evidence="1">Heteromultimer composed of HisG and HisZ subunits.</text>
</comment>
<comment type="subcellular location">
    <subcellularLocation>
        <location evidence="1">Cytoplasm</location>
    </subcellularLocation>
</comment>
<comment type="miscellaneous">
    <text>This function is generally fulfilled by the C-terminal part of HisG, which is missing in some bacteria such as this one.</text>
</comment>
<comment type="similarity">
    <text evidence="1">Belongs to the class-II aminoacyl-tRNA synthetase family. HisZ subfamily.</text>
</comment>
<reference key="1">
    <citation type="submission" date="2009-06" db="EMBL/GenBank/DDBJ databases">
        <title>Complete sequence of chromosome of Geopacillus sp. WCH70.</title>
        <authorList>
            <consortium name="US DOE Joint Genome Institute"/>
            <person name="Lucas S."/>
            <person name="Copeland A."/>
            <person name="Lapidus A."/>
            <person name="Glavina del Rio T."/>
            <person name="Dalin E."/>
            <person name="Tice H."/>
            <person name="Bruce D."/>
            <person name="Goodwin L."/>
            <person name="Pitluck S."/>
            <person name="Chertkov O."/>
            <person name="Brettin T."/>
            <person name="Detter J.C."/>
            <person name="Han C."/>
            <person name="Larimer F."/>
            <person name="Land M."/>
            <person name="Hauser L."/>
            <person name="Kyrpides N."/>
            <person name="Mikhailova N."/>
            <person name="Brumm P."/>
            <person name="Mead D.A."/>
            <person name="Richardson P."/>
        </authorList>
    </citation>
    <scope>NUCLEOTIDE SEQUENCE [LARGE SCALE GENOMIC DNA]</scope>
    <source>
        <strain>WCH70</strain>
    </source>
</reference>
<feature type="chain" id="PRO_1000203114" description="ATP phosphoribosyltransferase regulatory subunit">
    <location>
        <begin position="1"/>
        <end position="392"/>
    </location>
</feature>
<name>HISZ_GEOSW</name>
<organism>
    <name type="scientific">Geobacillus sp. (strain WCH70)</name>
    <dbReference type="NCBI Taxonomy" id="471223"/>
    <lineage>
        <taxon>Bacteria</taxon>
        <taxon>Bacillati</taxon>
        <taxon>Bacillota</taxon>
        <taxon>Bacilli</taxon>
        <taxon>Bacillales</taxon>
        <taxon>Anoxybacillaceae</taxon>
        <taxon>Geobacillus</taxon>
    </lineage>
</organism>
<evidence type="ECO:0000255" key="1">
    <source>
        <dbReference type="HAMAP-Rule" id="MF_00125"/>
    </source>
</evidence>